<name>METK_METS4</name>
<proteinExistence type="inferred from homology"/>
<gene>
    <name evidence="1" type="primary">metK</name>
    <name type="ordered locus">M446_5288</name>
</gene>
<accession>B0UPH0</accession>
<evidence type="ECO:0000255" key="1">
    <source>
        <dbReference type="HAMAP-Rule" id="MF_00086"/>
    </source>
</evidence>
<sequence>MARSDYLFTSESVSEGHPDKVCDRISDTVVDAYLAEMPEARLGVETLATTNRIVIAGEVRGPDSVTFARLEELTRAAVKDIGYEQDGFHWKNADVAIYLHAQSADIAQGVDASGNKDEGAGDQGIMFGYATDETPALMPAPIYYAHKILKDLADARKGRVGEAAKLGPDAKSQVTVRYEGGRPVEATQIVLSTQHLDESLDSQGVRAIVEPYIRAALPGSWVTDRTVWHVNPTGKFVIGGPDGDCGLTGRKIIVDTYGGAAPHGGGAFSGKDPTKVDRSAAYAARYLAKNVVAAGLSRRATIQLAYAIGVAKPLSIYVDLHGTGRVEEAKLEKVLGEILDLSPRGIRTHLGLNKPIYARTSAYGHFGREPDRDGGFSWEKTDLVATLKSALA</sequence>
<keyword id="KW-0067">ATP-binding</keyword>
<keyword id="KW-0963">Cytoplasm</keyword>
<keyword id="KW-0460">Magnesium</keyword>
<keyword id="KW-0479">Metal-binding</keyword>
<keyword id="KW-0547">Nucleotide-binding</keyword>
<keyword id="KW-0554">One-carbon metabolism</keyword>
<keyword id="KW-0630">Potassium</keyword>
<keyword id="KW-0808">Transferase</keyword>
<dbReference type="EC" id="2.5.1.6" evidence="1"/>
<dbReference type="EMBL" id="CP000943">
    <property type="protein sequence ID" value="ACA19612.1"/>
    <property type="molecule type" value="Genomic_DNA"/>
</dbReference>
<dbReference type="RefSeq" id="WP_012334997.1">
    <property type="nucleotide sequence ID" value="NC_010511.1"/>
</dbReference>
<dbReference type="SMR" id="B0UPH0"/>
<dbReference type="STRING" id="426117.M446_5288"/>
<dbReference type="KEGG" id="met:M446_5288"/>
<dbReference type="eggNOG" id="COG0192">
    <property type="taxonomic scope" value="Bacteria"/>
</dbReference>
<dbReference type="HOGENOM" id="CLU_041802_1_1_5"/>
<dbReference type="UniPathway" id="UPA00315">
    <property type="reaction ID" value="UER00080"/>
</dbReference>
<dbReference type="GO" id="GO:0005737">
    <property type="term" value="C:cytoplasm"/>
    <property type="evidence" value="ECO:0007669"/>
    <property type="project" value="UniProtKB-SubCell"/>
</dbReference>
<dbReference type="GO" id="GO:0005524">
    <property type="term" value="F:ATP binding"/>
    <property type="evidence" value="ECO:0007669"/>
    <property type="project" value="UniProtKB-UniRule"/>
</dbReference>
<dbReference type="GO" id="GO:0000287">
    <property type="term" value="F:magnesium ion binding"/>
    <property type="evidence" value="ECO:0007669"/>
    <property type="project" value="UniProtKB-UniRule"/>
</dbReference>
<dbReference type="GO" id="GO:0004478">
    <property type="term" value="F:methionine adenosyltransferase activity"/>
    <property type="evidence" value="ECO:0007669"/>
    <property type="project" value="UniProtKB-UniRule"/>
</dbReference>
<dbReference type="GO" id="GO:0006730">
    <property type="term" value="P:one-carbon metabolic process"/>
    <property type="evidence" value="ECO:0007669"/>
    <property type="project" value="UniProtKB-KW"/>
</dbReference>
<dbReference type="GO" id="GO:0006556">
    <property type="term" value="P:S-adenosylmethionine biosynthetic process"/>
    <property type="evidence" value="ECO:0007669"/>
    <property type="project" value="UniProtKB-UniRule"/>
</dbReference>
<dbReference type="CDD" id="cd18079">
    <property type="entry name" value="S-AdoMet_synt"/>
    <property type="match status" value="1"/>
</dbReference>
<dbReference type="Gene3D" id="3.30.300.10">
    <property type="match status" value="3"/>
</dbReference>
<dbReference type="HAMAP" id="MF_00086">
    <property type="entry name" value="S_AdoMet_synth1"/>
    <property type="match status" value="1"/>
</dbReference>
<dbReference type="InterPro" id="IPR022631">
    <property type="entry name" value="ADOMET_SYNTHASE_CS"/>
</dbReference>
<dbReference type="InterPro" id="IPR022630">
    <property type="entry name" value="S-AdoMet_synt_C"/>
</dbReference>
<dbReference type="InterPro" id="IPR022629">
    <property type="entry name" value="S-AdoMet_synt_central"/>
</dbReference>
<dbReference type="InterPro" id="IPR022628">
    <property type="entry name" value="S-AdoMet_synt_N"/>
</dbReference>
<dbReference type="InterPro" id="IPR002133">
    <property type="entry name" value="S-AdoMet_synthetase"/>
</dbReference>
<dbReference type="InterPro" id="IPR022636">
    <property type="entry name" value="S-AdoMet_synthetase_sfam"/>
</dbReference>
<dbReference type="NCBIfam" id="TIGR01034">
    <property type="entry name" value="metK"/>
    <property type="match status" value="1"/>
</dbReference>
<dbReference type="PANTHER" id="PTHR11964">
    <property type="entry name" value="S-ADENOSYLMETHIONINE SYNTHETASE"/>
    <property type="match status" value="1"/>
</dbReference>
<dbReference type="Pfam" id="PF02773">
    <property type="entry name" value="S-AdoMet_synt_C"/>
    <property type="match status" value="1"/>
</dbReference>
<dbReference type="Pfam" id="PF02772">
    <property type="entry name" value="S-AdoMet_synt_M"/>
    <property type="match status" value="1"/>
</dbReference>
<dbReference type="Pfam" id="PF00438">
    <property type="entry name" value="S-AdoMet_synt_N"/>
    <property type="match status" value="1"/>
</dbReference>
<dbReference type="PIRSF" id="PIRSF000497">
    <property type="entry name" value="MAT"/>
    <property type="match status" value="1"/>
</dbReference>
<dbReference type="SUPFAM" id="SSF55973">
    <property type="entry name" value="S-adenosylmethionine synthetase"/>
    <property type="match status" value="3"/>
</dbReference>
<dbReference type="PROSITE" id="PS00376">
    <property type="entry name" value="ADOMET_SYNTHASE_1"/>
    <property type="match status" value="1"/>
</dbReference>
<dbReference type="PROSITE" id="PS00377">
    <property type="entry name" value="ADOMET_SYNTHASE_2"/>
    <property type="match status" value="1"/>
</dbReference>
<comment type="function">
    <text evidence="1">Catalyzes the formation of S-adenosylmethionine (AdoMet) from methionine and ATP. The overall synthetic reaction is composed of two sequential steps, AdoMet formation and the subsequent tripolyphosphate hydrolysis which occurs prior to release of AdoMet from the enzyme.</text>
</comment>
<comment type="catalytic activity">
    <reaction evidence="1">
        <text>L-methionine + ATP + H2O = S-adenosyl-L-methionine + phosphate + diphosphate</text>
        <dbReference type="Rhea" id="RHEA:21080"/>
        <dbReference type="ChEBI" id="CHEBI:15377"/>
        <dbReference type="ChEBI" id="CHEBI:30616"/>
        <dbReference type="ChEBI" id="CHEBI:33019"/>
        <dbReference type="ChEBI" id="CHEBI:43474"/>
        <dbReference type="ChEBI" id="CHEBI:57844"/>
        <dbReference type="ChEBI" id="CHEBI:59789"/>
        <dbReference type="EC" id="2.5.1.6"/>
    </reaction>
</comment>
<comment type="cofactor">
    <cofactor evidence="1">
        <name>Mg(2+)</name>
        <dbReference type="ChEBI" id="CHEBI:18420"/>
    </cofactor>
    <text evidence="1">Binds 2 divalent ions per subunit.</text>
</comment>
<comment type="cofactor">
    <cofactor evidence="1">
        <name>K(+)</name>
        <dbReference type="ChEBI" id="CHEBI:29103"/>
    </cofactor>
    <text evidence="1">Binds 1 potassium ion per subunit.</text>
</comment>
<comment type="pathway">
    <text evidence="1">Amino-acid biosynthesis; S-adenosyl-L-methionine biosynthesis; S-adenosyl-L-methionine from L-methionine: step 1/1.</text>
</comment>
<comment type="subunit">
    <text evidence="1">Homotetramer; dimer of dimers.</text>
</comment>
<comment type="subcellular location">
    <subcellularLocation>
        <location evidence="1">Cytoplasm</location>
    </subcellularLocation>
</comment>
<comment type="similarity">
    <text evidence="1">Belongs to the AdoMet synthase family.</text>
</comment>
<protein>
    <recommendedName>
        <fullName evidence="1">S-adenosylmethionine synthase</fullName>
        <shortName evidence="1">AdoMet synthase</shortName>
        <ecNumber evidence="1">2.5.1.6</ecNumber>
    </recommendedName>
    <alternativeName>
        <fullName evidence="1">MAT</fullName>
    </alternativeName>
    <alternativeName>
        <fullName evidence="1">Methionine adenosyltransferase</fullName>
    </alternativeName>
</protein>
<feature type="chain" id="PRO_1000093064" description="S-adenosylmethionine synthase">
    <location>
        <begin position="1"/>
        <end position="392"/>
    </location>
</feature>
<feature type="region of interest" description="Flexible loop" evidence="1">
    <location>
        <begin position="102"/>
        <end position="112"/>
    </location>
</feature>
<feature type="binding site" description="in other chain" evidence="1">
    <location>
        <position position="17"/>
    </location>
    <ligand>
        <name>ATP</name>
        <dbReference type="ChEBI" id="CHEBI:30616"/>
        <note>ligand shared between two neighboring subunits</note>
    </ligand>
</feature>
<feature type="binding site" evidence="1">
    <location>
        <position position="19"/>
    </location>
    <ligand>
        <name>Mg(2+)</name>
        <dbReference type="ChEBI" id="CHEBI:18420"/>
    </ligand>
</feature>
<feature type="binding site" evidence="1">
    <location>
        <position position="45"/>
    </location>
    <ligand>
        <name>K(+)</name>
        <dbReference type="ChEBI" id="CHEBI:29103"/>
    </ligand>
</feature>
<feature type="binding site" description="in other chain" evidence="1">
    <location>
        <position position="58"/>
    </location>
    <ligand>
        <name>L-methionine</name>
        <dbReference type="ChEBI" id="CHEBI:57844"/>
        <note>ligand shared between two neighboring subunits</note>
    </ligand>
</feature>
<feature type="binding site" description="in other chain" evidence="1">
    <location>
        <position position="102"/>
    </location>
    <ligand>
        <name>L-methionine</name>
        <dbReference type="ChEBI" id="CHEBI:57844"/>
        <note>ligand shared between two neighboring subunits</note>
    </ligand>
</feature>
<feature type="binding site" description="in other chain" evidence="1">
    <location>
        <begin position="169"/>
        <end position="171"/>
    </location>
    <ligand>
        <name>ATP</name>
        <dbReference type="ChEBI" id="CHEBI:30616"/>
        <note>ligand shared between two neighboring subunits</note>
    </ligand>
</feature>
<feature type="binding site" description="in other chain" evidence="1">
    <location>
        <begin position="235"/>
        <end position="236"/>
    </location>
    <ligand>
        <name>ATP</name>
        <dbReference type="ChEBI" id="CHEBI:30616"/>
        <note>ligand shared between two neighboring subunits</note>
    </ligand>
</feature>
<feature type="binding site" evidence="1">
    <location>
        <position position="244"/>
    </location>
    <ligand>
        <name>ATP</name>
        <dbReference type="ChEBI" id="CHEBI:30616"/>
        <note>ligand shared between two neighboring subunits</note>
    </ligand>
</feature>
<feature type="binding site" evidence="1">
    <location>
        <position position="244"/>
    </location>
    <ligand>
        <name>L-methionine</name>
        <dbReference type="ChEBI" id="CHEBI:57844"/>
        <note>ligand shared between two neighboring subunits</note>
    </ligand>
</feature>
<feature type="binding site" description="in other chain" evidence="1">
    <location>
        <begin position="250"/>
        <end position="251"/>
    </location>
    <ligand>
        <name>ATP</name>
        <dbReference type="ChEBI" id="CHEBI:30616"/>
        <note>ligand shared between two neighboring subunits</note>
    </ligand>
</feature>
<feature type="binding site" evidence="1">
    <location>
        <position position="267"/>
    </location>
    <ligand>
        <name>ATP</name>
        <dbReference type="ChEBI" id="CHEBI:30616"/>
        <note>ligand shared between two neighboring subunits</note>
    </ligand>
</feature>
<feature type="binding site" evidence="1">
    <location>
        <position position="271"/>
    </location>
    <ligand>
        <name>ATP</name>
        <dbReference type="ChEBI" id="CHEBI:30616"/>
        <note>ligand shared between two neighboring subunits</note>
    </ligand>
</feature>
<feature type="binding site" description="in other chain" evidence="1">
    <location>
        <position position="275"/>
    </location>
    <ligand>
        <name>L-methionine</name>
        <dbReference type="ChEBI" id="CHEBI:57844"/>
        <note>ligand shared between two neighboring subunits</note>
    </ligand>
</feature>
<reference key="1">
    <citation type="submission" date="2008-02" db="EMBL/GenBank/DDBJ databases">
        <title>Complete sequence of chromosome of Methylobacterium sp. 4-46.</title>
        <authorList>
            <consortium name="US DOE Joint Genome Institute"/>
            <person name="Copeland A."/>
            <person name="Lucas S."/>
            <person name="Lapidus A."/>
            <person name="Glavina del Rio T."/>
            <person name="Dalin E."/>
            <person name="Tice H."/>
            <person name="Bruce D."/>
            <person name="Goodwin L."/>
            <person name="Pitluck S."/>
            <person name="Chertkov O."/>
            <person name="Brettin T."/>
            <person name="Detter J.C."/>
            <person name="Han C."/>
            <person name="Kuske C.R."/>
            <person name="Schmutz J."/>
            <person name="Larimer F."/>
            <person name="Land M."/>
            <person name="Hauser L."/>
            <person name="Kyrpides N."/>
            <person name="Ivanova N."/>
            <person name="Marx C.J."/>
            <person name="Richardson P."/>
        </authorList>
    </citation>
    <scope>NUCLEOTIDE SEQUENCE [LARGE SCALE GENOMIC DNA]</scope>
    <source>
        <strain>4-46</strain>
    </source>
</reference>
<organism>
    <name type="scientific">Methylobacterium sp. (strain 4-46)</name>
    <dbReference type="NCBI Taxonomy" id="426117"/>
    <lineage>
        <taxon>Bacteria</taxon>
        <taxon>Pseudomonadati</taxon>
        <taxon>Pseudomonadota</taxon>
        <taxon>Alphaproteobacteria</taxon>
        <taxon>Hyphomicrobiales</taxon>
        <taxon>Methylobacteriaceae</taxon>
        <taxon>Methylobacterium</taxon>
    </lineage>
</organism>